<sequence>MGMRMRMMFTVFLLVVLANTVVSFPSDRDSDGADAEASDEPVEFERDENGCCWNPSCPRPRCTGRR</sequence>
<name>CA120_CONBU</name>
<keyword id="KW-0027">Amidation</keyword>
<keyword id="KW-1015">Disulfide bond</keyword>
<keyword id="KW-0872">Ion channel impairing toxin</keyword>
<keyword id="KW-0528">Neurotoxin</keyword>
<keyword id="KW-0964">Secreted</keyword>
<keyword id="KW-0732">Signal</keyword>
<keyword id="KW-0800">Toxin</keyword>
<organism>
    <name type="scientific">Conus bullatus</name>
    <name type="common">Bubble cone</name>
    <dbReference type="NCBI Taxonomy" id="89438"/>
    <lineage>
        <taxon>Eukaryota</taxon>
        <taxon>Metazoa</taxon>
        <taxon>Spiralia</taxon>
        <taxon>Lophotrochozoa</taxon>
        <taxon>Mollusca</taxon>
        <taxon>Gastropoda</taxon>
        <taxon>Caenogastropoda</taxon>
        <taxon>Neogastropoda</taxon>
        <taxon>Conoidea</taxon>
        <taxon>Conidae</taxon>
        <taxon>Conus</taxon>
        <taxon>Textilia</taxon>
    </lineage>
</organism>
<protein>
    <recommendedName>
        <fullName>Conotoxin Bu1.4</fullName>
    </recommendedName>
    <alternativeName>
        <fullName>Bu1.3</fullName>
    </alternativeName>
    <alternativeName>
        <fullName>Conotoxin Bu20</fullName>
    </alternativeName>
</protein>
<evidence type="ECO:0000250" key="1"/>
<evidence type="ECO:0000250" key="2">
    <source>
        <dbReference type="UniProtKB" id="P69657"/>
    </source>
</evidence>
<evidence type="ECO:0000255" key="3"/>
<evidence type="ECO:0000256" key="4">
    <source>
        <dbReference type="SAM" id="MobiDB-lite"/>
    </source>
</evidence>
<evidence type="ECO:0000305" key="5"/>
<comment type="subcellular location">
    <subcellularLocation>
        <location evidence="1">Secreted</location>
    </subcellularLocation>
</comment>
<comment type="tissue specificity">
    <text>Expressed by the venom duct.</text>
</comment>
<comment type="domain">
    <text>The cysteine framework is I (CC-C-C). Alpha4/4 pattern.</text>
</comment>
<comment type="similarity">
    <text evidence="5">Belongs to the conotoxin A superfamily.</text>
</comment>
<comment type="caution">
    <text evidence="5">There is a discrepancy in nomenclature: was submitted as Bu1.4 in PubMed:20143226 but is named Bu1.3 in ConoServer.</text>
</comment>
<accession>P0CY88</accession>
<reference key="1">
    <citation type="journal article" date="2011" name="BMC Genomics">
        <title>Characterization of the Conus bullatus genome and its venom-duct transcriptome.</title>
        <authorList>
            <person name="Hu H."/>
            <person name="Bandyopadhyay P.K."/>
            <person name="Olivera B.M."/>
            <person name="Yandell M."/>
        </authorList>
    </citation>
    <scope>NUCLEOTIDE SEQUENCE [MRNA]</scope>
    <source>
        <tissue>Venom duct</tissue>
    </source>
</reference>
<reference key="2">
    <citation type="patent" date="2004-09-28" number="US6797808">
        <title>Alpha-conotoxin peptides.</title>
        <authorList>
            <person name="Watkins M."/>
            <person name="Olivera B.M."/>
            <person name="Hillyard D.R."/>
            <person name="McIntosh J.M."/>
            <person name="Jones R.M."/>
        </authorList>
    </citation>
    <scope>NUCLEOTIDE SEQUENCE [GENOMIC DNA] OF 8-66</scope>
</reference>
<reference key="3">
    <citation type="patent" date="2007-11-07" number="EP1852440">
        <title>Alpha-conotoxin peptides.</title>
        <authorList>
            <person name="Watkins M."/>
            <person name="Hillyard D.R."/>
            <person name="McIntosh M.J."/>
            <person name="Jones R.M."/>
            <person name="Olivera B.M."/>
        </authorList>
    </citation>
    <scope>NUCLEOTIDE SEQUENCE OF 8-66</scope>
</reference>
<reference key="4">
    <citation type="journal article" date="2010" name="J. Mol. Evol.">
        <title>Evolution of conus peptide genes: duplication and positive selection in the A-Superfamily.</title>
        <authorList>
            <person name="Puillandre N."/>
            <person name="Watkins M."/>
            <person name="Olivera B.M."/>
        </authorList>
    </citation>
    <scope>NOMENCLATURE</scope>
</reference>
<feature type="signal peptide" evidence="3">
    <location>
        <begin position="1"/>
        <end position="23"/>
    </location>
</feature>
<feature type="propeptide" id="PRO_0000409992" evidence="1">
    <location>
        <begin position="24"/>
        <end position="46"/>
    </location>
</feature>
<feature type="peptide" id="PRO_0000409993" description="Conotoxin Bu1.4">
    <location>
        <begin position="47"/>
        <end position="63"/>
    </location>
</feature>
<feature type="region of interest" description="Disordered" evidence="4">
    <location>
        <begin position="25"/>
        <end position="48"/>
    </location>
</feature>
<feature type="compositionally biased region" description="Acidic residues" evidence="4">
    <location>
        <begin position="32"/>
        <end position="42"/>
    </location>
</feature>
<feature type="modified residue" description="Threonine amide" evidence="1">
    <location>
        <position position="63"/>
    </location>
</feature>
<feature type="disulfide bond" evidence="2">
    <location>
        <begin position="51"/>
        <end position="57"/>
    </location>
</feature>
<feature type="disulfide bond" evidence="2">
    <location>
        <begin position="52"/>
        <end position="62"/>
    </location>
</feature>
<feature type="sequence conflict" description="In Ref. 2; AR584845 and 3; CAR81558." evidence="5" ref="2 3">
    <original>N</original>
    <variation>T</variation>
    <location>
        <position position="19"/>
    </location>
</feature>
<dbReference type="EMBL" id="AR584845">
    <property type="status" value="NOT_ANNOTATED_CDS"/>
    <property type="molecule type" value="Genomic_DNA"/>
</dbReference>
<dbReference type="EMBL" id="FB299974">
    <property type="protein sequence ID" value="CAR81558.1"/>
    <property type="molecule type" value="Unassigned_DNA"/>
</dbReference>
<dbReference type="GO" id="GO:0005576">
    <property type="term" value="C:extracellular region"/>
    <property type="evidence" value="ECO:0007669"/>
    <property type="project" value="UniProtKB-SubCell"/>
</dbReference>
<dbReference type="GO" id="GO:0030550">
    <property type="term" value="F:acetylcholine receptor inhibitor activity"/>
    <property type="evidence" value="ECO:0007669"/>
    <property type="project" value="InterPro"/>
</dbReference>
<dbReference type="GO" id="GO:0099106">
    <property type="term" value="F:ion channel regulator activity"/>
    <property type="evidence" value="ECO:0007669"/>
    <property type="project" value="UniProtKB-KW"/>
</dbReference>
<dbReference type="GO" id="GO:0090729">
    <property type="term" value="F:toxin activity"/>
    <property type="evidence" value="ECO:0007669"/>
    <property type="project" value="UniProtKB-KW"/>
</dbReference>
<dbReference type="InterPro" id="IPR009958">
    <property type="entry name" value="Conotoxin_a-typ"/>
</dbReference>
<dbReference type="Pfam" id="PF07365">
    <property type="entry name" value="Toxin_8"/>
    <property type="match status" value="1"/>
</dbReference>
<proteinExistence type="evidence at transcript level"/>